<proteinExistence type="inferred from homology"/>
<protein>
    <recommendedName>
        <fullName evidence="1">Large ribosomal subunit protein uL22</fullName>
    </recommendedName>
    <alternativeName>
        <fullName evidence="2">50S ribosomal protein L22</fullName>
    </alternativeName>
</protein>
<gene>
    <name evidence="1" type="primary">rplV</name>
    <name type="ordered locus">CKL_0229</name>
</gene>
<reference key="1">
    <citation type="journal article" date="2008" name="Proc. Natl. Acad. Sci. U.S.A.">
        <title>The genome of Clostridium kluyveri, a strict anaerobe with unique metabolic features.</title>
        <authorList>
            <person name="Seedorf H."/>
            <person name="Fricke W.F."/>
            <person name="Veith B."/>
            <person name="Brueggemann H."/>
            <person name="Liesegang H."/>
            <person name="Strittmatter A."/>
            <person name="Miethke M."/>
            <person name="Buckel W."/>
            <person name="Hinderberger J."/>
            <person name="Li F."/>
            <person name="Hagemeier C."/>
            <person name="Thauer R.K."/>
            <person name="Gottschalk G."/>
        </authorList>
    </citation>
    <scope>NUCLEOTIDE SEQUENCE [LARGE SCALE GENOMIC DNA]</scope>
    <source>
        <strain>ATCC 8527 / DSM 555 / NBRC 12016 / NCIMB 10680 / K1</strain>
    </source>
</reference>
<evidence type="ECO:0000255" key="1">
    <source>
        <dbReference type="HAMAP-Rule" id="MF_01331"/>
    </source>
</evidence>
<evidence type="ECO:0000305" key="2"/>
<comment type="function">
    <text evidence="1">This protein binds specifically to 23S rRNA; its binding is stimulated by other ribosomal proteins, e.g. L4, L17, and L20. It is important during the early stages of 50S assembly. It makes multiple contacts with different domains of the 23S rRNA in the assembled 50S subunit and ribosome (By similarity).</text>
</comment>
<comment type="function">
    <text evidence="1">The globular domain of the protein is located near the polypeptide exit tunnel on the outside of the subunit, while an extended beta-hairpin is found that lines the wall of the exit tunnel in the center of the 70S ribosome.</text>
</comment>
<comment type="subunit">
    <text evidence="1">Part of the 50S ribosomal subunit.</text>
</comment>
<comment type="similarity">
    <text evidence="1">Belongs to the universal ribosomal protein uL22 family.</text>
</comment>
<dbReference type="EMBL" id="CP000673">
    <property type="protein sequence ID" value="EDK32283.1"/>
    <property type="molecule type" value="Genomic_DNA"/>
</dbReference>
<dbReference type="RefSeq" id="WP_011988808.1">
    <property type="nucleotide sequence ID" value="NC_009706.1"/>
</dbReference>
<dbReference type="SMR" id="A5N4Q2"/>
<dbReference type="STRING" id="431943.CKL_0229"/>
<dbReference type="KEGG" id="ckl:CKL_0229"/>
<dbReference type="eggNOG" id="COG0091">
    <property type="taxonomic scope" value="Bacteria"/>
</dbReference>
<dbReference type="HOGENOM" id="CLU_083987_3_3_9"/>
<dbReference type="Proteomes" id="UP000002411">
    <property type="component" value="Chromosome"/>
</dbReference>
<dbReference type="GO" id="GO:0022625">
    <property type="term" value="C:cytosolic large ribosomal subunit"/>
    <property type="evidence" value="ECO:0007669"/>
    <property type="project" value="TreeGrafter"/>
</dbReference>
<dbReference type="GO" id="GO:0019843">
    <property type="term" value="F:rRNA binding"/>
    <property type="evidence" value="ECO:0007669"/>
    <property type="project" value="UniProtKB-UniRule"/>
</dbReference>
<dbReference type="GO" id="GO:0003735">
    <property type="term" value="F:structural constituent of ribosome"/>
    <property type="evidence" value="ECO:0007669"/>
    <property type="project" value="InterPro"/>
</dbReference>
<dbReference type="GO" id="GO:0006412">
    <property type="term" value="P:translation"/>
    <property type="evidence" value="ECO:0007669"/>
    <property type="project" value="UniProtKB-UniRule"/>
</dbReference>
<dbReference type="CDD" id="cd00336">
    <property type="entry name" value="Ribosomal_L22"/>
    <property type="match status" value="1"/>
</dbReference>
<dbReference type="FunFam" id="3.90.470.10:FF:000011">
    <property type="entry name" value="50S ribosomal protein L22"/>
    <property type="match status" value="1"/>
</dbReference>
<dbReference type="Gene3D" id="3.90.470.10">
    <property type="entry name" value="Ribosomal protein L22/L17"/>
    <property type="match status" value="1"/>
</dbReference>
<dbReference type="HAMAP" id="MF_01331_B">
    <property type="entry name" value="Ribosomal_uL22_B"/>
    <property type="match status" value="1"/>
</dbReference>
<dbReference type="InterPro" id="IPR001063">
    <property type="entry name" value="Ribosomal_uL22"/>
</dbReference>
<dbReference type="InterPro" id="IPR005727">
    <property type="entry name" value="Ribosomal_uL22_bac/chlpt-type"/>
</dbReference>
<dbReference type="InterPro" id="IPR047867">
    <property type="entry name" value="Ribosomal_uL22_bac/org-type"/>
</dbReference>
<dbReference type="InterPro" id="IPR018260">
    <property type="entry name" value="Ribosomal_uL22_CS"/>
</dbReference>
<dbReference type="InterPro" id="IPR036394">
    <property type="entry name" value="Ribosomal_uL22_sf"/>
</dbReference>
<dbReference type="NCBIfam" id="TIGR01044">
    <property type="entry name" value="rplV_bact"/>
    <property type="match status" value="1"/>
</dbReference>
<dbReference type="PANTHER" id="PTHR13501">
    <property type="entry name" value="CHLOROPLAST 50S RIBOSOMAL PROTEIN L22-RELATED"/>
    <property type="match status" value="1"/>
</dbReference>
<dbReference type="PANTHER" id="PTHR13501:SF8">
    <property type="entry name" value="LARGE RIBOSOMAL SUBUNIT PROTEIN UL22M"/>
    <property type="match status" value="1"/>
</dbReference>
<dbReference type="Pfam" id="PF00237">
    <property type="entry name" value="Ribosomal_L22"/>
    <property type="match status" value="1"/>
</dbReference>
<dbReference type="SUPFAM" id="SSF54843">
    <property type="entry name" value="Ribosomal protein L22"/>
    <property type="match status" value="1"/>
</dbReference>
<dbReference type="PROSITE" id="PS00464">
    <property type="entry name" value="RIBOSOMAL_L22"/>
    <property type="match status" value="1"/>
</dbReference>
<keyword id="KW-1185">Reference proteome</keyword>
<keyword id="KW-0687">Ribonucleoprotein</keyword>
<keyword id="KW-0689">Ribosomal protein</keyword>
<keyword id="KW-0694">RNA-binding</keyword>
<keyword id="KW-0699">rRNA-binding</keyword>
<feature type="chain" id="PRO_1000086549" description="Large ribosomal subunit protein uL22">
    <location>
        <begin position="1"/>
        <end position="111"/>
    </location>
</feature>
<accession>A5N4Q2</accession>
<organism>
    <name type="scientific">Clostridium kluyveri (strain ATCC 8527 / DSM 555 / NBRC 12016 / NCIMB 10680 / K1)</name>
    <dbReference type="NCBI Taxonomy" id="431943"/>
    <lineage>
        <taxon>Bacteria</taxon>
        <taxon>Bacillati</taxon>
        <taxon>Bacillota</taxon>
        <taxon>Clostridia</taxon>
        <taxon>Eubacteriales</taxon>
        <taxon>Clostridiaceae</taxon>
        <taxon>Clostridium</taxon>
    </lineage>
</organism>
<sequence>MEAKAIAKYVRMSSMKVRVVLNLVRGKNVNEAFAILKYTPRDAAVVVNKLLKSAVANAENNLDLNRDTLYISEAYACEGPTLKRFQPHAQGRAFRINKRSSHITLIVKERE</sequence>
<name>RL22_CLOK5</name>